<comment type="function">
    <text evidence="5">Postsynaptic protein that regulates circuit dynamics in the central nervous system by modulating the temporal dynamics of interneuron recruitment. Specifically present in excitatory synapses onto oriens-lacunosum molecular (OLM) interneurons and acts as a regulator of presynaptic release probability to direct the formation of highly facilitating pyramidal-OLM synapses. Inhibits phosphatase activity of protein phosphatase 1 (PP1) complexes.</text>
</comment>
<comment type="subunit">
    <text evidence="1">Interacts with PPP1CA.</text>
</comment>
<comment type="subcellular location">
    <subcellularLocation>
        <location evidence="6">Membrane</location>
        <topology evidence="6">Single-pass type I membrane protein</topology>
    </subcellularLocation>
    <subcellularLocation>
        <location evidence="5">Cell projection</location>
        <location evidence="5">Dendrite</location>
    </subcellularLocation>
    <text>Localizes to excitatory synapses onto somatostatin (Sst)-containing oriens-lacunosum moleculare (O-LM) interneurons.</text>
</comment>
<comment type="tissue specificity">
    <text evidence="5">Selectively expressed in perialvear somatostatin (Sst)-containing interneurons.</text>
</comment>
<keyword id="KW-0966">Cell projection</keyword>
<keyword id="KW-0325">Glycoprotein</keyword>
<keyword id="KW-0433">Leucine-rich repeat</keyword>
<keyword id="KW-0472">Membrane</keyword>
<keyword id="KW-0597">Phosphoprotein</keyword>
<keyword id="KW-0650">Protein phosphatase inhibitor</keyword>
<keyword id="KW-1185">Reference proteome</keyword>
<keyword id="KW-0677">Repeat</keyword>
<keyword id="KW-0732">Signal</keyword>
<keyword id="KW-0812">Transmembrane</keyword>
<keyword id="KW-1133">Transmembrane helix</keyword>
<sequence>MAGHGWGTAWVLVAAATLLHAGGLAQGDCWLIEGDKGFVWLAICSQNQPPYEAIPQQINNTIVDLRLNENRIRSVQYASLSRFGNLTYLNLTKNEIGYIEDGAFSGQFNLQVLQLGYNRLRNLTEGMLRGLSKLEYLYLQANLIEVVMASAFWECPNIVNIDLSMNRIQQLGSGTFAGLTKLSVCEIYSNPFYCSCELLGFLRWLAAFTNATQTHDRVQCESPPVYAGYFLLGQGRHGHQRSILSKLQSVCTEGSYTAEVLGPPRPVPGRSQPGHSPPPPPPEPSDMPCADDECFSGDGTTPLVILTTLVPQTEARPSMKVKQLTQNSATIMVQLPSPFNRMYTLEQYNNSKSFTVSKLTQPQEEIRLTNLYTLTNYTYCVVSTSSGTHHNHTCLTICLPKPPSPPGPVPSPSTATHYIMTILGCLFGMVLVLGAVYYCLRKRRRQEEKHKKAVAAAAGSLKKTIIELKYGPEIEAPGLAPLTQGPLLGPEAVTRIPYLPAATSDVEQYKLVESSETPKATKGNYIEVRTGEPQERRGCELSRPGEPQSSVAEISTIAKEVDRVNQIINNCIDALKSESTSFQGAKSGAVSAAEPQLVLLSEPLASKHSFLSPVYKDAFGHGGLQRHHSVEAAPGPPRASTSSSGSARSPRTFRAEATGTHKAPATETKYIEKSSPVPETILTVTPAATVLRAEADKSRQYGEHRHSYPGSHPAEPPAPPPPPPTHEGLGGRKASILEPLTRPRPRDLVYSQLSPQYHNLSYSSSPEYTCRASPSIWERLRLSRRRHKDDAEFMAAGHALRKKVQFAKDEDLHDILDYWKGVSAQHKS</sequence>
<gene>
    <name type="primary">Elfn1</name>
    <name type="synonym">Ppp1r28</name>
</gene>
<accession>Q8C8T7</accession>
<protein>
    <recommendedName>
        <fullName>Protein ELFN1</fullName>
    </recommendedName>
    <alternativeName>
        <fullName>Extracellular leucine-rich repeat and fibronectin type-III domain-containing protein 1</fullName>
    </alternativeName>
    <alternativeName>
        <fullName>Protein phosphatase 1 regulatory subunit 28</fullName>
    </alternativeName>
</protein>
<name>ELFN1_MOUSE</name>
<proteinExistence type="evidence at transcript level"/>
<reference key="1">
    <citation type="journal article" date="2005" name="Science">
        <title>The transcriptional landscape of the mammalian genome.</title>
        <authorList>
            <person name="Carninci P."/>
            <person name="Kasukawa T."/>
            <person name="Katayama S."/>
            <person name="Gough J."/>
            <person name="Frith M.C."/>
            <person name="Maeda N."/>
            <person name="Oyama R."/>
            <person name="Ravasi T."/>
            <person name="Lenhard B."/>
            <person name="Wells C."/>
            <person name="Kodzius R."/>
            <person name="Shimokawa K."/>
            <person name="Bajic V.B."/>
            <person name="Brenner S.E."/>
            <person name="Batalov S."/>
            <person name="Forrest A.R."/>
            <person name="Zavolan M."/>
            <person name="Davis M.J."/>
            <person name="Wilming L.G."/>
            <person name="Aidinis V."/>
            <person name="Allen J.E."/>
            <person name="Ambesi-Impiombato A."/>
            <person name="Apweiler R."/>
            <person name="Aturaliya R.N."/>
            <person name="Bailey T.L."/>
            <person name="Bansal M."/>
            <person name="Baxter L."/>
            <person name="Beisel K.W."/>
            <person name="Bersano T."/>
            <person name="Bono H."/>
            <person name="Chalk A.M."/>
            <person name="Chiu K.P."/>
            <person name="Choudhary V."/>
            <person name="Christoffels A."/>
            <person name="Clutterbuck D.R."/>
            <person name="Crowe M.L."/>
            <person name="Dalla E."/>
            <person name="Dalrymple B.P."/>
            <person name="de Bono B."/>
            <person name="Della Gatta G."/>
            <person name="di Bernardo D."/>
            <person name="Down T."/>
            <person name="Engstrom P."/>
            <person name="Fagiolini M."/>
            <person name="Faulkner G."/>
            <person name="Fletcher C.F."/>
            <person name="Fukushima T."/>
            <person name="Furuno M."/>
            <person name="Futaki S."/>
            <person name="Gariboldi M."/>
            <person name="Georgii-Hemming P."/>
            <person name="Gingeras T.R."/>
            <person name="Gojobori T."/>
            <person name="Green R.E."/>
            <person name="Gustincich S."/>
            <person name="Harbers M."/>
            <person name="Hayashi Y."/>
            <person name="Hensch T.K."/>
            <person name="Hirokawa N."/>
            <person name="Hill D."/>
            <person name="Huminiecki L."/>
            <person name="Iacono M."/>
            <person name="Ikeo K."/>
            <person name="Iwama A."/>
            <person name="Ishikawa T."/>
            <person name="Jakt M."/>
            <person name="Kanapin A."/>
            <person name="Katoh M."/>
            <person name="Kawasawa Y."/>
            <person name="Kelso J."/>
            <person name="Kitamura H."/>
            <person name="Kitano H."/>
            <person name="Kollias G."/>
            <person name="Krishnan S.P."/>
            <person name="Kruger A."/>
            <person name="Kummerfeld S.K."/>
            <person name="Kurochkin I.V."/>
            <person name="Lareau L.F."/>
            <person name="Lazarevic D."/>
            <person name="Lipovich L."/>
            <person name="Liu J."/>
            <person name="Liuni S."/>
            <person name="McWilliam S."/>
            <person name="Madan Babu M."/>
            <person name="Madera M."/>
            <person name="Marchionni L."/>
            <person name="Matsuda H."/>
            <person name="Matsuzawa S."/>
            <person name="Miki H."/>
            <person name="Mignone F."/>
            <person name="Miyake S."/>
            <person name="Morris K."/>
            <person name="Mottagui-Tabar S."/>
            <person name="Mulder N."/>
            <person name="Nakano N."/>
            <person name="Nakauchi H."/>
            <person name="Ng P."/>
            <person name="Nilsson R."/>
            <person name="Nishiguchi S."/>
            <person name="Nishikawa S."/>
            <person name="Nori F."/>
            <person name="Ohara O."/>
            <person name="Okazaki Y."/>
            <person name="Orlando V."/>
            <person name="Pang K.C."/>
            <person name="Pavan W.J."/>
            <person name="Pavesi G."/>
            <person name="Pesole G."/>
            <person name="Petrovsky N."/>
            <person name="Piazza S."/>
            <person name="Reed J."/>
            <person name="Reid J.F."/>
            <person name="Ring B.Z."/>
            <person name="Ringwald M."/>
            <person name="Rost B."/>
            <person name="Ruan Y."/>
            <person name="Salzberg S.L."/>
            <person name="Sandelin A."/>
            <person name="Schneider C."/>
            <person name="Schoenbach C."/>
            <person name="Sekiguchi K."/>
            <person name="Semple C.A."/>
            <person name="Seno S."/>
            <person name="Sessa L."/>
            <person name="Sheng Y."/>
            <person name="Shibata Y."/>
            <person name="Shimada H."/>
            <person name="Shimada K."/>
            <person name="Silva D."/>
            <person name="Sinclair B."/>
            <person name="Sperling S."/>
            <person name="Stupka E."/>
            <person name="Sugiura K."/>
            <person name="Sultana R."/>
            <person name="Takenaka Y."/>
            <person name="Taki K."/>
            <person name="Tammoja K."/>
            <person name="Tan S.L."/>
            <person name="Tang S."/>
            <person name="Taylor M.S."/>
            <person name="Tegner J."/>
            <person name="Teichmann S.A."/>
            <person name="Ueda H.R."/>
            <person name="van Nimwegen E."/>
            <person name="Verardo R."/>
            <person name="Wei C.L."/>
            <person name="Yagi K."/>
            <person name="Yamanishi H."/>
            <person name="Zabarovsky E."/>
            <person name="Zhu S."/>
            <person name="Zimmer A."/>
            <person name="Hide W."/>
            <person name="Bult C."/>
            <person name="Grimmond S.M."/>
            <person name="Teasdale R.D."/>
            <person name="Liu E.T."/>
            <person name="Brusic V."/>
            <person name="Quackenbush J."/>
            <person name="Wahlestedt C."/>
            <person name="Mattick J.S."/>
            <person name="Hume D.A."/>
            <person name="Kai C."/>
            <person name="Sasaki D."/>
            <person name="Tomaru Y."/>
            <person name="Fukuda S."/>
            <person name="Kanamori-Katayama M."/>
            <person name="Suzuki M."/>
            <person name="Aoki J."/>
            <person name="Arakawa T."/>
            <person name="Iida J."/>
            <person name="Imamura K."/>
            <person name="Itoh M."/>
            <person name="Kato T."/>
            <person name="Kawaji H."/>
            <person name="Kawagashira N."/>
            <person name="Kawashima T."/>
            <person name="Kojima M."/>
            <person name="Kondo S."/>
            <person name="Konno H."/>
            <person name="Nakano K."/>
            <person name="Ninomiya N."/>
            <person name="Nishio T."/>
            <person name="Okada M."/>
            <person name="Plessy C."/>
            <person name="Shibata K."/>
            <person name="Shiraki T."/>
            <person name="Suzuki S."/>
            <person name="Tagami M."/>
            <person name="Waki K."/>
            <person name="Watahiki A."/>
            <person name="Okamura-Oho Y."/>
            <person name="Suzuki H."/>
            <person name="Kawai J."/>
            <person name="Hayashizaki Y."/>
        </authorList>
    </citation>
    <scope>NUCLEOTIDE SEQUENCE [LARGE SCALE MRNA]</scope>
    <source>
        <strain>C57BL/6J</strain>
        <tissue>Retina</tissue>
    </source>
</reference>
<reference key="2">
    <citation type="journal article" date="2004" name="Genome Res.">
        <title>The status, quality, and expansion of the NIH full-length cDNA project: the Mammalian Gene Collection (MGC).</title>
        <authorList>
            <consortium name="The MGC Project Team"/>
        </authorList>
    </citation>
    <scope>NUCLEOTIDE SEQUENCE [LARGE SCALE MRNA]</scope>
    <source>
        <strain>C57BL/6J</strain>
        <tissue>Brain</tissue>
    </source>
</reference>
<reference key="3">
    <citation type="journal article" date="2012" name="Science">
        <title>Elfn1 regulates target-specific release probability at CA1-interneuron synapses.</title>
        <authorList>
            <person name="Sylwestrak E.L."/>
            <person name="Ghosh A."/>
        </authorList>
    </citation>
    <scope>FUNCTION</scope>
    <scope>SUBCELLULAR LOCATION</scope>
    <scope>TISSUE SPECIFICITY</scope>
</reference>
<organism>
    <name type="scientific">Mus musculus</name>
    <name type="common">Mouse</name>
    <dbReference type="NCBI Taxonomy" id="10090"/>
    <lineage>
        <taxon>Eukaryota</taxon>
        <taxon>Metazoa</taxon>
        <taxon>Chordata</taxon>
        <taxon>Craniata</taxon>
        <taxon>Vertebrata</taxon>
        <taxon>Euteleostomi</taxon>
        <taxon>Mammalia</taxon>
        <taxon>Eutheria</taxon>
        <taxon>Euarchontoglires</taxon>
        <taxon>Glires</taxon>
        <taxon>Rodentia</taxon>
        <taxon>Myomorpha</taxon>
        <taxon>Muroidea</taxon>
        <taxon>Muridae</taxon>
        <taxon>Murinae</taxon>
        <taxon>Mus</taxon>
        <taxon>Mus</taxon>
    </lineage>
</organism>
<feature type="signal peptide" evidence="3">
    <location>
        <begin position="1"/>
        <end position="25"/>
    </location>
</feature>
<feature type="chain" id="PRO_0000343739" description="Protein ELFN1">
    <location>
        <begin position="26"/>
        <end position="828"/>
    </location>
</feature>
<feature type="topological domain" description="Extracellular" evidence="3">
    <location>
        <begin position="26"/>
        <end position="418"/>
    </location>
</feature>
<feature type="transmembrane region" description="Helical" evidence="3">
    <location>
        <begin position="419"/>
        <end position="439"/>
    </location>
</feature>
<feature type="topological domain" description="Cytoplasmic" evidence="3">
    <location>
        <begin position="440"/>
        <end position="828"/>
    </location>
</feature>
<feature type="repeat" description="LRR 1">
    <location>
        <begin position="61"/>
        <end position="82"/>
    </location>
</feature>
<feature type="repeat" description="LRR 2">
    <location>
        <begin position="85"/>
        <end position="106"/>
    </location>
</feature>
<feature type="repeat" description="LRR 3">
    <location>
        <begin position="109"/>
        <end position="130"/>
    </location>
</feature>
<feature type="repeat" description="LRR 4">
    <location>
        <begin position="133"/>
        <end position="154"/>
    </location>
</feature>
<feature type="repeat" description="LRR 5">
    <location>
        <begin position="157"/>
        <end position="178"/>
    </location>
</feature>
<feature type="domain" description="LRRCT">
    <location>
        <begin position="190"/>
        <end position="253"/>
    </location>
</feature>
<feature type="domain" description="Fibronectin type-III">
    <location>
        <begin position="312"/>
        <end position="399"/>
    </location>
</feature>
<feature type="region of interest" description="Disordered" evidence="4">
    <location>
        <begin position="258"/>
        <end position="293"/>
    </location>
</feature>
<feature type="region of interest" description="Disordered" evidence="4">
    <location>
        <begin position="627"/>
        <end position="674"/>
    </location>
</feature>
<feature type="region of interest" description="Disordered" evidence="4">
    <location>
        <begin position="697"/>
        <end position="731"/>
    </location>
</feature>
<feature type="compositionally biased region" description="Pro residues" evidence="4">
    <location>
        <begin position="275"/>
        <end position="285"/>
    </location>
</feature>
<feature type="compositionally biased region" description="Low complexity" evidence="4">
    <location>
        <begin position="638"/>
        <end position="652"/>
    </location>
</feature>
<feature type="compositionally biased region" description="Basic and acidic residues" evidence="4">
    <location>
        <begin position="697"/>
        <end position="706"/>
    </location>
</feature>
<feature type="compositionally biased region" description="Pro residues" evidence="4">
    <location>
        <begin position="714"/>
        <end position="725"/>
    </location>
</feature>
<feature type="modified residue" description="Phosphoserine" evidence="2">
    <location>
        <position position="460"/>
    </location>
</feature>
<feature type="modified residue" description="Phosphoserine" evidence="2">
    <location>
        <position position="646"/>
    </location>
</feature>
<feature type="glycosylation site" description="N-linked (GlcNAc...) asparagine" evidence="3">
    <location>
        <position position="85"/>
    </location>
</feature>
<feature type="glycosylation site" description="N-linked (GlcNAc...) asparagine" evidence="3">
    <location>
        <position position="90"/>
    </location>
</feature>
<feature type="glycosylation site" description="N-linked (GlcNAc...) asparagine" evidence="3">
    <location>
        <position position="122"/>
    </location>
</feature>
<feature type="glycosylation site" description="N-linked (GlcNAc...) asparagine" evidence="3">
    <location>
        <position position="210"/>
    </location>
</feature>
<feature type="glycosylation site" description="N-linked (GlcNAc...) asparagine" evidence="3">
    <location>
        <position position="376"/>
    </location>
</feature>
<dbReference type="EMBL" id="AK044511">
    <property type="protein sequence ID" value="BAC31957.1"/>
    <property type="molecule type" value="mRNA"/>
</dbReference>
<dbReference type="EMBL" id="BC059029">
    <property type="protein sequence ID" value="AAH59029.1"/>
    <property type="molecule type" value="mRNA"/>
</dbReference>
<dbReference type="CCDS" id="CCDS19816.1"/>
<dbReference type="RefSeq" id="NP_001371115.1">
    <property type="nucleotide sequence ID" value="NM_001384186.1"/>
</dbReference>
<dbReference type="RefSeq" id="NP_780731.1">
    <property type="nucleotide sequence ID" value="NM_175522.4"/>
</dbReference>
<dbReference type="RefSeq" id="XP_006504764.1">
    <property type="nucleotide sequence ID" value="XM_006504701.3"/>
</dbReference>
<dbReference type="RefSeq" id="XP_006504765.1">
    <property type="nucleotide sequence ID" value="XM_006504702.4"/>
</dbReference>
<dbReference type="RefSeq" id="XP_006504766.1">
    <property type="nucleotide sequence ID" value="XM_006504703.4"/>
</dbReference>
<dbReference type="RefSeq" id="XP_006504767.1">
    <property type="nucleotide sequence ID" value="XM_006504704.5"/>
</dbReference>
<dbReference type="RefSeq" id="XP_017176371.1">
    <property type="nucleotide sequence ID" value="XM_017320882.2"/>
</dbReference>
<dbReference type="RefSeq" id="XP_030110364.1">
    <property type="nucleotide sequence ID" value="XM_030254504.2"/>
</dbReference>
<dbReference type="SMR" id="Q8C8T7"/>
<dbReference type="BioGRID" id="232502">
    <property type="interactions" value="8"/>
</dbReference>
<dbReference type="FunCoup" id="Q8C8T7">
    <property type="interactions" value="75"/>
</dbReference>
<dbReference type="IntAct" id="Q8C8T7">
    <property type="interactions" value="1"/>
</dbReference>
<dbReference type="STRING" id="10090.ENSMUSP00000053869"/>
<dbReference type="GlyConnect" id="2624">
    <property type="glycosylation" value="2 N-Linked glycans (1 site)"/>
</dbReference>
<dbReference type="GlyCosmos" id="Q8C8T7">
    <property type="glycosylation" value="6 sites, 2 glycans"/>
</dbReference>
<dbReference type="GlyGen" id="Q8C8T7">
    <property type="glycosylation" value="8 sites, 6 N-linked glycans (5 sites), 1 O-linked glycan (2 sites)"/>
</dbReference>
<dbReference type="iPTMnet" id="Q8C8T7"/>
<dbReference type="PhosphoSitePlus" id="Q8C8T7"/>
<dbReference type="PaxDb" id="10090-ENSMUSP00000053869"/>
<dbReference type="ProteomicsDB" id="277818"/>
<dbReference type="Antibodypedia" id="67952">
    <property type="antibodies" value="58 antibodies from 15 providers"/>
</dbReference>
<dbReference type="DNASU" id="243312"/>
<dbReference type="Ensembl" id="ENSMUST00000050519.8">
    <property type="protein sequence ID" value="ENSMUSP00000053869.7"/>
    <property type="gene ID" value="ENSMUSG00000048988.9"/>
</dbReference>
<dbReference type="GeneID" id="243312"/>
<dbReference type="KEGG" id="mmu:243312"/>
<dbReference type="UCSC" id="uc009ahi.2">
    <property type="organism name" value="mouse"/>
</dbReference>
<dbReference type="AGR" id="MGI:2442479"/>
<dbReference type="CTD" id="392617"/>
<dbReference type="MGI" id="MGI:2442479">
    <property type="gene designation" value="Elfn1"/>
</dbReference>
<dbReference type="VEuPathDB" id="HostDB:ENSMUSG00000048988"/>
<dbReference type="eggNOG" id="ENOG502QVFI">
    <property type="taxonomic scope" value="Eukaryota"/>
</dbReference>
<dbReference type="GeneTree" id="ENSGT00940000161391"/>
<dbReference type="HOGENOM" id="CLU_018770_0_0_1"/>
<dbReference type="InParanoid" id="Q8C8T7"/>
<dbReference type="OMA" id="TCELYSN"/>
<dbReference type="OrthoDB" id="676979at2759"/>
<dbReference type="PhylomeDB" id="Q8C8T7"/>
<dbReference type="TreeFam" id="TF332887"/>
<dbReference type="BioGRID-ORCS" id="243312">
    <property type="hits" value="2 hits in 82 CRISPR screens"/>
</dbReference>
<dbReference type="CD-CODE" id="CE726F99">
    <property type="entry name" value="Postsynaptic density"/>
</dbReference>
<dbReference type="ChiTaRS" id="Elfn1">
    <property type="organism name" value="mouse"/>
</dbReference>
<dbReference type="PRO" id="PR:Q8C8T7"/>
<dbReference type="Proteomes" id="UP000000589">
    <property type="component" value="Chromosome 5"/>
</dbReference>
<dbReference type="RNAct" id="Q8C8T7">
    <property type="molecule type" value="protein"/>
</dbReference>
<dbReference type="Bgee" id="ENSMUSG00000048988">
    <property type="expression patterns" value="Expressed in retinal neural layer and 79 other cell types or tissues"/>
</dbReference>
<dbReference type="GO" id="GO:0043679">
    <property type="term" value="C:axon terminus"/>
    <property type="evidence" value="ECO:0000314"/>
    <property type="project" value="MGI"/>
</dbReference>
<dbReference type="GO" id="GO:0030425">
    <property type="term" value="C:dendrite"/>
    <property type="evidence" value="ECO:0000314"/>
    <property type="project" value="UniProtKB"/>
</dbReference>
<dbReference type="GO" id="GO:0060076">
    <property type="term" value="C:excitatory synapse"/>
    <property type="evidence" value="ECO:0000314"/>
    <property type="project" value="UniProtKB"/>
</dbReference>
<dbReference type="GO" id="GO:0098978">
    <property type="term" value="C:glutamatergic synapse"/>
    <property type="evidence" value="ECO:0000314"/>
    <property type="project" value="SynGO"/>
</dbReference>
<dbReference type="GO" id="GO:0044306">
    <property type="term" value="C:neuron projection terminus"/>
    <property type="evidence" value="ECO:0000314"/>
    <property type="project" value="MGI"/>
</dbReference>
<dbReference type="GO" id="GO:0098839">
    <property type="term" value="C:postsynaptic density membrane"/>
    <property type="evidence" value="ECO:0000314"/>
    <property type="project" value="SynGO"/>
</dbReference>
<dbReference type="GO" id="GO:0045202">
    <property type="term" value="C:synapse"/>
    <property type="evidence" value="ECO:0000314"/>
    <property type="project" value="MGI"/>
</dbReference>
<dbReference type="GO" id="GO:0004864">
    <property type="term" value="F:protein phosphatase inhibitor activity"/>
    <property type="evidence" value="ECO:0007669"/>
    <property type="project" value="UniProtKB-KW"/>
</dbReference>
<dbReference type="GO" id="GO:0007268">
    <property type="term" value="P:chemical synaptic transmission"/>
    <property type="evidence" value="ECO:0000316"/>
    <property type="project" value="MGI"/>
</dbReference>
<dbReference type="GO" id="GO:0045184">
    <property type="term" value="P:establishment of protein localization"/>
    <property type="evidence" value="ECO:0000314"/>
    <property type="project" value="MGI"/>
</dbReference>
<dbReference type="GO" id="GO:0007416">
    <property type="term" value="P:synapse assembly"/>
    <property type="evidence" value="ECO:0000315"/>
    <property type="project" value="MGI"/>
</dbReference>
<dbReference type="GO" id="GO:0050808">
    <property type="term" value="P:synapse organization"/>
    <property type="evidence" value="ECO:0000315"/>
    <property type="project" value="UniProtKB"/>
</dbReference>
<dbReference type="GO" id="GO:0099560">
    <property type="term" value="P:synaptic membrane adhesion"/>
    <property type="evidence" value="ECO:0000314"/>
    <property type="project" value="SynGO"/>
</dbReference>
<dbReference type="GO" id="GO:0099536">
    <property type="term" value="P:synaptic signaling"/>
    <property type="evidence" value="ECO:0000315"/>
    <property type="project" value="MGI"/>
</dbReference>
<dbReference type="GO" id="GO:0007601">
    <property type="term" value="P:visual perception"/>
    <property type="evidence" value="ECO:0000315"/>
    <property type="project" value="MGI"/>
</dbReference>
<dbReference type="FunFam" id="3.80.10.10:FF:000047">
    <property type="entry name" value="protein phosphatase 1 regulatory subunit 29"/>
    <property type="match status" value="1"/>
</dbReference>
<dbReference type="Gene3D" id="3.80.10.10">
    <property type="entry name" value="Ribonuclease Inhibitor"/>
    <property type="match status" value="1"/>
</dbReference>
<dbReference type="InterPro" id="IPR000483">
    <property type="entry name" value="Cys-rich_flank_reg_C"/>
</dbReference>
<dbReference type="InterPro" id="IPR055106">
    <property type="entry name" value="ELFN_Fn3"/>
</dbReference>
<dbReference type="InterPro" id="IPR001611">
    <property type="entry name" value="Leu-rich_rpt"/>
</dbReference>
<dbReference type="InterPro" id="IPR003591">
    <property type="entry name" value="Leu-rich_rpt_typical-subtyp"/>
</dbReference>
<dbReference type="InterPro" id="IPR032675">
    <property type="entry name" value="LRR_dom_sf"/>
</dbReference>
<dbReference type="InterPro" id="IPR050541">
    <property type="entry name" value="LRR_TM_domain-containing"/>
</dbReference>
<dbReference type="PANTHER" id="PTHR24369">
    <property type="entry name" value="ANTIGEN BSP, PUTATIVE-RELATED"/>
    <property type="match status" value="1"/>
</dbReference>
<dbReference type="PANTHER" id="PTHR24369:SF204">
    <property type="entry name" value="PROTEIN PHOSPHATASE 1 REGULATORY SUBUNIT 29-RELATED"/>
    <property type="match status" value="1"/>
</dbReference>
<dbReference type="Pfam" id="PF22986">
    <property type="entry name" value="Fn3_ELFN"/>
    <property type="match status" value="1"/>
</dbReference>
<dbReference type="Pfam" id="PF13855">
    <property type="entry name" value="LRR_8"/>
    <property type="match status" value="1"/>
</dbReference>
<dbReference type="SMART" id="SM00369">
    <property type="entry name" value="LRR_TYP"/>
    <property type="match status" value="4"/>
</dbReference>
<dbReference type="SMART" id="SM00082">
    <property type="entry name" value="LRRCT"/>
    <property type="match status" value="1"/>
</dbReference>
<dbReference type="SUPFAM" id="SSF52058">
    <property type="entry name" value="L domain-like"/>
    <property type="match status" value="1"/>
</dbReference>
<dbReference type="PROSITE" id="PS51450">
    <property type="entry name" value="LRR"/>
    <property type="match status" value="5"/>
</dbReference>
<evidence type="ECO:0000250" key="1"/>
<evidence type="ECO:0000250" key="2">
    <source>
        <dbReference type="UniProtKB" id="P0C7U0"/>
    </source>
</evidence>
<evidence type="ECO:0000255" key="3"/>
<evidence type="ECO:0000256" key="4">
    <source>
        <dbReference type="SAM" id="MobiDB-lite"/>
    </source>
</evidence>
<evidence type="ECO:0000269" key="5">
    <source>
    </source>
</evidence>
<evidence type="ECO:0000305" key="6"/>